<comment type="function">
    <text evidence="1">Phosphodiesterase (PDE) that catalyzes the hydrolysis of cyclic-di-GMP (c-di-GMP) to 5'-pGpG.</text>
</comment>
<comment type="catalytic activity">
    <reaction evidence="1">
        <text>3',3'-c-di-GMP + H2O = 5'-phosphoguanylyl(3'-&gt;5')guanosine + H(+)</text>
        <dbReference type="Rhea" id="RHEA:24902"/>
        <dbReference type="ChEBI" id="CHEBI:15377"/>
        <dbReference type="ChEBI" id="CHEBI:15378"/>
        <dbReference type="ChEBI" id="CHEBI:58754"/>
        <dbReference type="ChEBI" id="CHEBI:58805"/>
        <dbReference type="EC" id="3.1.4.52"/>
    </reaction>
</comment>
<comment type="subcellular location">
    <subcellularLocation>
        <location evidence="4">Cell inner membrane</location>
        <topology evidence="2">Multi-pass membrane protein</topology>
    </subcellularLocation>
</comment>
<comment type="induction">
    <text evidence="5">Expressed at both 28 and 37 degrees Celsius during exponential growth. Repressed by RpoS.</text>
</comment>
<comment type="caution">
    <text evidence="8">Was originally (Ref.4) thought to originate from Proteus vulgaris, but was shown to originate from E.coli.</text>
</comment>
<dbReference type="EC" id="3.1.4.52" evidence="1"/>
<dbReference type="EMBL" id="U00096">
    <property type="protein sequence ID" value="AAC75237.1"/>
    <property type="molecule type" value="Genomic_DNA"/>
</dbReference>
<dbReference type="EMBL" id="AP009048">
    <property type="protein sequence ID" value="BAA15984.1"/>
    <property type="molecule type" value="Genomic_DNA"/>
</dbReference>
<dbReference type="EMBL" id="U12780">
    <property type="protein sequence ID" value="AAA50754.1"/>
    <property type="molecule type" value="Genomic_DNA"/>
</dbReference>
<dbReference type="EMBL" id="U83404">
    <property type="protein sequence ID" value="AAB51508.1"/>
    <property type="molecule type" value="Genomic_DNA"/>
</dbReference>
<dbReference type="PIR" id="G64986">
    <property type="entry name" value="G64986"/>
</dbReference>
<dbReference type="RefSeq" id="NP_416681.1">
    <property type="nucleotide sequence ID" value="NC_000913.3"/>
</dbReference>
<dbReference type="RefSeq" id="WP_000470560.1">
    <property type="nucleotide sequence ID" value="NZ_SSZK01000027.1"/>
</dbReference>
<dbReference type="SMR" id="P76446"/>
<dbReference type="BioGRID" id="4261095">
    <property type="interactions" value="10"/>
</dbReference>
<dbReference type="DIP" id="DIP-10813N"/>
<dbReference type="FunCoup" id="P76446">
    <property type="interactions" value="16"/>
</dbReference>
<dbReference type="STRING" id="511145.b2176"/>
<dbReference type="PaxDb" id="511145-b2176"/>
<dbReference type="EnsemblBacteria" id="AAC75237">
    <property type="protein sequence ID" value="AAC75237"/>
    <property type="gene ID" value="b2176"/>
</dbReference>
<dbReference type="GeneID" id="946695"/>
<dbReference type="KEGG" id="ecj:JW2164"/>
<dbReference type="KEGG" id="eco:b2176"/>
<dbReference type="KEGG" id="ecoc:C3026_12175"/>
<dbReference type="PATRIC" id="fig|1411691.4.peg.60"/>
<dbReference type="EchoBASE" id="EB3830"/>
<dbReference type="eggNOG" id="COG2200">
    <property type="taxonomic scope" value="Bacteria"/>
</dbReference>
<dbReference type="HOGENOM" id="CLU_000445_131_2_6"/>
<dbReference type="InParanoid" id="P76446"/>
<dbReference type="OMA" id="FLQGYWI"/>
<dbReference type="OrthoDB" id="675397at2"/>
<dbReference type="PhylomeDB" id="P76446"/>
<dbReference type="BioCyc" id="EcoCyc:G7148-MONOMER"/>
<dbReference type="PRO" id="PR:P76446"/>
<dbReference type="Proteomes" id="UP000000625">
    <property type="component" value="Chromosome"/>
</dbReference>
<dbReference type="GO" id="GO:0005886">
    <property type="term" value="C:plasma membrane"/>
    <property type="evidence" value="ECO:0000314"/>
    <property type="project" value="EcoCyc"/>
</dbReference>
<dbReference type="GO" id="GO:0071111">
    <property type="term" value="F:cyclic-guanylate-specific phosphodiesterase activity"/>
    <property type="evidence" value="ECO:0000316"/>
    <property type="project" value="EcoCyc"/>
</dbReference>
<dbReference type="GO" id="GO:1900190">
    <property type="term" value="P:regulation of single-species biofilm formation"/>
    <property type="evidence" value="ECO:0000318"/>
    <property type="project" value="GO_Central"/>
</dbReference>
<dbReference type="CDD" id="cd01948">
    <property type="entry name" value="EAL"/>
    <property type="match status" value="1"/>
</dbReference>
<dbReference type="FunFam" id="3.20.20.450:FF:000008">
    <property type="entry name" value="Cyclic di-GMP phosphodiesterase"/>
    <property type="match status" value="1"/>
</dbReference>
<dbReference type="Gene3D" id="3.20.20.450">
    <property type="entry name" value="EAL domain"/>
    <property type="match status" value="1"/>
</dbReference>
<dbReference type="InterPro" id="IPR024744">
    <property type="entry name" value="CSS-motif_dom"/>
</dbReference>
<dbReference type="InterPro" id="IPR050706">
    <property type="entry name" value="Cyclic-di-GMP_PDE-like"/>
</dbReference>
<dbReference type="InterPro" id="IPR001633">
    <property type="entry name" value="EAL_dom"/>
</dbReference>
<dbReference type="InterPro" id="IPR035919">
    <property type="entry name" value="EAL_sf"/>
</dbReference>
<dbReference type="NCBIfam" id="NF007839">
    <property type="entry name" value="PRK10551.1"/>
    <property type="match status" value="1"/>
</dbReference>
<dbReference type="PANTHER" id="PTHR33121">
    <property type="entry name" value="CYCLIC DI-GMP PHOSPHODIESTERASE PDEF"/>
    <property type="match status" value="1"/>
</dbReference>
<dbReference type="PANTHER" id="PTHR33121:SF73">
    <property type="entry name" value="CYCLIC DI-GMP PHOSPHODIESTERASE PDEN-RELATED"/>
    <property type="match status" value="1"/>
</dbReference>
<dbReference type="Pfam" id="PF12792">
    <property type="entry name" value="CSS-motif"/>
    <property type="match status" value="1"/>
</dbReference>
<dbReference type="Pfam" id="PF00563">
    <property type="entry name" value="EAL"/>
    <property type="match status" value="1"/>
</dbReference>
<dbReference type="SMART" id="SM00052">
    <property type="entry name" value="EAL"/>
    <property type="match status" value="1"/>
</dbReference>
<dbReference type="SUPFAM" id="SSF141868">
    <property type="entry name" value="EAL domain-like"/>
    <property type="match status" value="1"/>
</dbReference>
<dbReference type="PROSITE" id="PS50883">
    <property type="entry name" value="EAL"/>
    <property type="match status" value="1"/>
</dbReference>
<keyword id="KW-0973">c-di-GMP</keyword>
<keyword id="KW-0997">Cell inner membrane</keyword>
<keyword id="KW-1003">Cell membrane</keyword>
<keyword id="KW-0378">Hydrolase</keyword>
<keyword id="KW-0472">Membrane</keyword>
<keyword id="KW-1185">Reference proteome</keyword>
<keyword id="KW-0812">Transmembrane</keyword>
<keyword id="KW-1133">Transmembrane helix</keyword>
<sequence>MFIRAPNFGRKLLLTCIVAGVMIAILVSCLQFLVAWHKHEVKYDTLITDVQKYLDTYFADLKSTTDRLQPLTLDTCQQANPELTARAAFSMNVRTFVLVKDKKTFCSSATGEMDIPLNELIPALDINKNVDMAILPGTPMVPNKPAIVIWYRNPLLKNSGVFAALNLNLTPSLFYSSRQEDYDGVALIIGNTALSTFSSRLMNVNELTDMPVRETKIAGIPLTVRLYADDWTWNDVWYAFLLGGMSGTVVGLLCYYLMSVRMRPGREIMTAIKREQFYVAYQPVVDTQALRVTGLEVLLRWRHPVAGEIPPDAFINFAESQKMIVPLTQHLFELIARDAAELEKVLPVGVKFGINIAPDHLHSESFKADIQKLLTSLPAHHFQIVLEITERDMLKEQEATQLFAWLHSVGVEIAIDDFGTGHSALIYLERFTLDYLKIDRGFINAIGTETITSPVLDAVLTLAKRLNMLTVAEGVETPEQARWLSERGVNFMQGYWISRPLPLDDFVRWLKKPYTPQW</sequence>
<accession>P76446</accession>
<accession>P77139</accession>
<accession>Q52613</accession>
<proteinExistence type="evidence at transcript level"/>
<feature type="chain" id="PRO_0000097517" description="Probable cyclic di-GMP phosphodiesterase PdeN">
    <location>
        <begin position="1"/>
        <end position="518"/>
    </location>
</feature>
<feature type="transmembrane region" description="Helical" evidence="2">
    <location>
        <begin position="16"/>
        <end position="36"/>
    </location>
</feature>
<feature type="transmembrane region" description="Helical" evidence="2">
    <location>
        <begin position="236"/>
        <end position="256"/>
    </location>
</feature>
<feature type="domain" description="EAL" evidence="3">
    <location>
        <begin position="261"/>
        <end position="514"/>
    </location>
</feature>
<feature type="sequence conflict" description="In Ref. 4; no nucleotide entry." evidence="7" ref="4">
    <original>RWLSERGVNFMQGYWISRPLPLDDFVRWLKKPYTPQW</original>
    <variation>D</variation>
    <location>
        <begin position="482"/>
        <end position="518"/>
    </location>
</feature>
<protein>
    <recommendedName>
        <fullName evidence="7">Probable cyclic di-GMP phosphodiesterase PdeN</fullName>
        <ecNumber evidence="1">3.1.4.52</ecNumber>
    </recommendedName>
</protein>
<evidence type="ECO:0000250" key="1">
    <source>
        <dbReference type="UniProtKB" id="P21514"/>
    </source>
</evidence>
<evidence type="ECO:0000255" key="2"/>
<evidence type="ECO:0000255" key="3">
    <source>
        <dbReference type="PROSITE-ProRule" id="PRU00074"/>
    </source>
</evidence>
<evidence type="ECO:0000269" key="4">
    <source>
    </source>
</evidence>
<evidence type="ECO:0000269" key="5">
    <source>
    </source>
</evidence>
<evidence type="ECO:0000303" key="6">
    <source>
    </source>
</evidence>
<evidence type="ECO:0000305" key="7"/>
<evidence type="ECO:0000305" key="8">
    <source>
    </source>
</evidence>
<organism>
    <name type="scientific">Escherichia coli (strain K12)</name>
    <dbReference type="NCBI Taxonomy" id="83333"/>
    <lineage>
        <taxon>Bacteria</taxon>
        <taxon>Pseudomonadati</taxon>
        <taxon>Pseudomonadota</taxon>
        <taxon>Gammaproteobacteria</taxon>
        <taxon>Enterobacterales</taxon>
        <taxon>Enterobacteriaceae</taxon>
        <taxon>Escherichia</taxon>
    </lineage>
</organism>
<name>PDEN_ECOLI</name>
<gene>
    <name evidence="6" type="primary">pdeN</name>
    <name type="synonym">rtn</name>
    <name type="ordered locus">b2176</name>
    <name type="ordered locus">JW2164</name>
</gene>
<reference key="1">
    <citation type="journal article" date="1996" name="DNA Res.">
        <title>A 460-kb DNA sequence of the Escherichia coli K-12 genome corresponding to the 40.1-50.0 min region on the linkage map.</title>
        <authorList>
            <person name="Itoh T."/>
            <person name="Aiba H."/>
            <person name="Baba T."/>
            <person name="Fujita K."/>
            <person name="Hayashi K."/>
            <person name="Inada T."/>
            <person name="Isono K."/>
            <person name="Kasai H."/>
            <person name="Kimura S."/>
            <person name="Kitakawa M."/>
            <person name="Kitagawa M."/>
            <person name="Makino K."/>
            <person name="Miki T."/>
            <person name="Mizobuchi K."/>
            <person name="Mori H."/>
            <person name="Mori T."/>
            <person name="Motomura K."/>
            <person name="Nakade S."/>
            <person name="Nakamura Y."/>
            <person name="Nashimoto H."/>
            <person name="Nishio Y."/>
            <person name="Oshima T."/>
            <person name="Saito N."/>
            <person name="Sampei G."/>
            <person name="Seki Y."/>
            <person name="Sivasundaram S."/>
            <person name="Tagami H."/>
            <person name="Takeda J."/>
            <person name="Takemoto K."/>
            <person name="Wada C."/>
            <person name="Yamamoto Y."/>
            <person name="Horiuchi T."/>
        </authorList>
    </citation>
    <scope>NUCLEOTIDE SEQUENCE [LARGE SCALE GENOMIC DNA]</scope>
    <source>
        <strain>K12 / W3110 / ATCC 27325 / DSM 5911</strain>
    </source>
</reference>
<reference key="2">
    <citation type="journal article" date="1997" name="Science">
        <title>The complete genome sequence of Escherichia coli K-12.</title>
        <authorList>
            <person name="Blattner F.R."/>
            <person name="Plunkett G. III"/>
            <person name="Bloch C.A."/>
            <person name="Perna N.T."/>
            <person name="Burland V."/>
            <person name="Riley M."/>
            <person name="Collado-Vides J."/>
            <person name="Glasner J.D."/>
            <person name="Rode C.K."/>
            <person name="Mayhew G.F."/>
            <person name="Gregor J."/>
            <person name="Davis N.W."/>
            <person name="Kirkpatrick H.A."/>
            <person name="Goeden M.A."/>
            <person name="Rose D.J."/>
            <person name="Mau B."/>
            <person name="Shao Y."/>
        </authorList>
    </citation>
    <scope>NUCLEOTIDE SEQUENCE [LARGE SCALE GENOMIC DNA]</scope>
    <source>
        <strain>K12 / MG1655 / ATCC 47076</strain>
    </source>
</reference>
<reference key="3">
    <citation type="journal article" date="2006" name="Mol. Syst. Biol.">
        <title>Highly accurate genome sequences of Escherichia coli K-12 strains MG1655 and W3110.</title>
        <authorList>
            <person name="Hayashi K."/>
            <person name="Morooka N."/>
            <person name="Yamamoto Y."/>
            <person name="Fujita K."/>
            <person name="Isono K."/>
            <person name="Choi S."/>
            <person name="Ohtsubo E."/>
            <person name="Baba T."/>
            <person name="Wanner B.L."/>
            <person name="Mori H."/>
            <person name="Horiuchi T."/>
        </authorList>
    </citation>
    <scope>NUCLEOTIDE SEQUENCE [LARGE SCALE GENOMIC DNA]</scope>
    <source>
        <strain>K12 / W3110 / ATCC 27325 / DSM 5911</strain>
    </source>
</reference>
<reference key="4">
    <citation type="journal article" date="1994" name="Mol. Cells">
        <title>Structural analysis of an rtn gene isolated from Proteus vulgaris.</title>
        <authorList>
            <person name="Kim C.S."/>
            <person name="Lee D.W."/>
            <person name="Chae K.-S."/>
            <person name="Hwang U.W."/>
        </authorList>
    </citation>
    <scope>NUCLEOTIDE SEQUENCE [GENOMIC DNA]</scope>
</reference>
<reference key="5">
    <citation type="journal article" date="1997" name="J. Bacteriol.">
        <title>The rtn gene of Proteus vulgaris is actually from Escherichia coli.</title>
        <authorList>
            <person name="Hall B.G."/>
        </authorList>
    </citation>
    <scope>NUCLEOTIDE SEQUENCE [GENOMIC DNA] OF 404-518</scope>
    <scope>SHOWS THAT SEQUENCE DESCRIBED IN KIM ET AL ORIGINATES FROM E.COLI</scope>
    <source>
        <strain>K12 / MG1063</strain>
    </source>
</reference>
<reference key="6">
    <citation type="journal article" date="2005" name="Science">
        <title>Global topology analysis of the Escherichia coli inner membrane proteome.</title>
        <authorList>
            <person name="Daley D.O."/>
            <person name="Rapp M."/>
            <person name="Granseth E."/>
            <person name="Melen K."/>
            <person name="Drew D."/>
            <person name="von Heijne G."/>
        </authorList>
    </citation>
    <scope>SUBCELLULAR LOCATION</scope>
    <source>
        <strain>K12 / MG1655 / ATCC 47076</strain>
    </source>
</reference>
<reference key="7">
    <citation type="journal article" date="2009" name="Microbiology">
        <title>Gene expression patterns and differential input into curli fimbriae regulation of all GGDEF/EAL domain proteins in Escherichia coli.</title>
        <authorList>
            <person name="Sommerfeldt N."/>
            <person name="Possling A."/>
            <person name="Becker G."/>
            <person name="Pesavento C."/>
            <person name="Tschowri N."/>
            <person name="Hengge R."/>
        </authorList>
    </citation>
    <scope>INDUCTION</scope>
    <scope>RPOS-REPRESSION</scope>
    <source>
        <strain>K12 / W3110 / ATCC 27325 / DSM 5911</strain>
    </source>
</reference>
<reference key="8">
    <citation type="journal article" date="2015" name="J. Bacteriol.">
        <title>Systematic nomenclature for GGDEF and EAL domain-containing cyclic di-GMP turnover proteins of Escherichia coli.</title>
        <authorList>
            <person name="Hengge R."/>
            <person name="Galperin M.Y."/>
            <person name="Ghigo J.M."/>
            <person name="Gomelsky M."/>
            <person name="Green J."/>
            <person name="Hughes K.T."/>
            <person name="Jenal U."/>
            <person name="Landini P."/>
        </authorList>
    </citation>
    <scope>NOMENCLATURE</scope>
</reference>